<dbReference type="EMBL" id="CP000720">
    <property type="protein sequence ID" value="ABS49021.1"/>
    <property type="status" value="ALT_INIT"/>
    <property type="molecule type" value="Genomic_DNA"/>
</dbReference>
<dbReference type="RefSeq" id="WP_012303495.1">
    <property type="nucleotide sequence ID" value="NC_009708.1"/>
</dbReference>
<dbReference type="SMR" id="A7FDZ0"/>
<dbReference type="KEGG" id="ypi:YpsIP31758_0475"/>
<dbReference type="HOGENOM" id="CLU_026091_1_1_6"/>
<dbReference type="Proteomes" id="UP000002412">
    <property type="component" value="Chromosome"/>
</dbReference>
<dbReference type="GO" id="GO:0031241">
    <property type="term" value="C:periplasmic side of cell outer membrane"/>
    <property type="evidence" value="ECO:0007669"/>
    <property type="project" value="UniProtKB-UniRule"/>
</dbReference>
<dbReference type="GO" id="GO:0030234">
    <property type="term" value="F:enzyme regulator activity"/>
    <property type="evidence" value="ECO:0007669"/>
    <property type="project" value="UniProtKB-UniRule"/>
</dbReference>
<dbReference type="GO" id="GO:0009252">
    <property type="term" value="P:peptidoglycan biosynthetic process"/>
    <property type="evidence" value="ECO:0007669"/>
    <property type="project" value="UniProtKB-UniRule"/>
</dbReference>
<dbReference type="GO" id="GO:0008360">
    <property type="term" value="P:regulation of cell shape"/>
    <property type="evidence" value="ECO:0007669"/>
    <property type="project" value="UniProtKB-KW"/>
</dbReference>
<dbReference type="CDD" id="cd06339">
    <property type="entry name" value="PBP1_YraM_LppC_lipoprotein-like"/>
    <property type="match status" value="1"/>
</dbReference>
<dbReference type="Gene3D" id="1.25.40.650">
    <property type="match status" value="1"/>
</dbReference>
<dbReference type="Gene3D" id="3.40.50.2300">
    <property type="match status" value="2"/>
</dbReference>
<dbReference type="Gene3D" id="1.25.40.10">
    <property type="entry name" value="Tetratricopeptide repeat domain"/>
    <property type="match status" value="1"/>
</dbReference>
<dbReference type="HAMAP" id="MF_01890">
    <property type="entry name" value="LpoA"/>
    <property type="match status" value="1"/>
</dbReference>
<dbReference type="InterPro" id="IPR007443">
    <property type="entry name" value="LpoA"/>
</dbReference>
<dbReference type="InterPro" id="IPR028082">
    <property type="entry name" value="Peripla_BP_I"/>
</dbReference>
<dbReference type="InterPro" id="IPR011990">
    <property type="entry name" value="TPR-like_helical_dom_sf"/>
</dbReference>
<dbReference type="PANTHER" id="PTHR38038">
    <property type="entry name" value="PENICILLIN-BINDING PROTEIN ACTIVATOR LPOA"/>
    <property type="match status" value="1"/>
</dbReference>
<dbReference type="PANTHER" id="PTHR38038:SF1">
    <property type="entry name" value="PENICILLIN-BINDING PROTEIN ACTIVATOR LPOA"/>
    <property type="match status" value="1"/>
</dbReference>
<dbReference type="Pfam" id="PF04348">
    <property type="entry name" value="LppC"/>
    <property type="match status" value="2"/>
</dbReference>
<dbReference type="SUPFAM" id="SSF53822">
    <property type="entry name" value="Periplasmic binding protein-like I"/>
    <property type="match status" value="1"/>
</dbReference>
<reference key="1">
    <citation type="journal article" date="2007" name="PLoS Genet.">
        <title>The complete genome sequence of Yersinia pseudotuberculosis IP31758, the causative agent of Far East scarlet-like fever.</title>
        <authorList>
            <person name="Eppinger M."/>
            <person name="Rosovitz M.J."/>
            <person name="Fricke W.F."/>
            <person name="Rasko D.A."/>
            <person name="Kokorina G."/>
            <person name="Fayolle C."/>
            <person name="Lindler L.E."/>
            <person name="Carniel E."/>
            <person name="Ravel J."/>
        </authorList>
    </citation>
    <scope>NUCLEOTIDE SEQUENCE [LARGE SCALE GENOMIC DNA]</scope>
    <source>
        <strain>IP 31758</strain>
    </source>
</reference>
<proteinExistence type="inferred from homology"/>
<keyword id="KW-0998">Cell outer membrane</keyword>
<keyword id="KW-0133">Cell shape</keyword>
<keyword id="KW-0449">Lipoprotein</keyword>
<keyword id="KW-0472">Membrane</keyword>
<keyword id="KW-0564">Palmitate</keyword>
<keyword id="KW-0573">Peptidoglycan synthesis</keyword>
<keyword id="KW-0732">Signal</keyword>
<feature type="signal peptide" evidence="1">
    <location>
        <begin position="1"/>
        <end position="25"/>
    </location>
</feature>
<feature type="chain" id="PRO_0000405954" description="Penicillin-binding protein activator LpoA">
    <location>
        <begin position="26"/>
        <end position="657"/>
    </location>
</feature>
<feature type="lipid moiety-binding region" description="N-palmitoyl cysteine" evidence="1">
    <location>
        <position position="26"/>
    </location>
</feature>
<feature type="lipid moiety-binding region" description="S-diacylglycerol cysteine" evidence="1">
    <location>
        <position position="26"/>
    </location>
</feature>
<protein>
    <recommendedName>
        <fullName evidence="1">Penicillin-binding protein activator LpoA</fullName>
        <shortName evidence="1">PBP activator LpoA</shortName>
    </recommendedName>
</protein>
<accession>A7FDZ0</accession>
<sequence>MLSSTFVRSKAGLVPVILAALILAACTGDAPQTPPPVNIQDEASANSDYYLQQLQQSSDDNKADWQLLAIRALLREAKVPQAAEQLSTLPANLSDTQRQEQQLLAAELLIAQKNTPAAADILAKLEATQLSANQKVRYYQAQIAANQDKATLPLIRAFIAQEPLLTDKAHQDNIDGTWQSLSQLTPQELNTMVINADENVLQGWLDLLRVYQDNKQDPELLKAGIKDWQTRYPQNPAAKNLPTALTQISNFSQASTAKIALLLPLSGPAQVFADAIQQGFTAAQNGSAVTASVPVTPNVTESSPTDTAAVVSDDTPATLPAPVTPPVVTNAQVKIYDTNTQPLAALLAQAQQDGATLVVGPLLKPEVEQLSATPSTLNILALNQPEASNNSPNICYFALSPEDEARDAAHHLWEQQKRMPLLLVPRGALGERIAKAFADEWQKQGGQTVLQQNFGSTTELKQSINSGAGIRLTGTPVSVSNVAAAPASVTIAGLTIPAPPIDAPVVSTSSSGNIDAVYIIATPSELTLIKPMIDMATSSRSKPALFASSRSYQAGAGPDYRLEMEGIQFSDIPLMAGSNPALLQQASAKYANDYSLVRLYAMGIDAWALANHFSEMRQIPGFQVKGVTGDLTASSDCVITRKLPWLQYRQGMVVPLA</sequence>
<name>LPOA_YERP3</name>
<evidence type="ECO:0000255" key="1">
    <source>
        <dbReference type="HAMAP-Rule" id="MF_01890"/>
    </source>
</evidence>
<evidence type="ECO:0000305" key="2"/>
<organism>
    <name type="scientific">Yersinia pseudotuberculosis serotype O:1b (strain IP 31758)</name>
    <dbReference type="NCBI Taxonomy" id="349747"/>
    <lineage>
        <taxon>Bacteria</taxon>
        <taxon>Pseudomonadati</taxon>
        <taxon>Pseudomonadota</taxon>
        <taxon>Gammaproteobacteria</taxon>
        <taxon>Enterobacterales</taxon>
        <taxon>Yersiniaceae</taxon>
        <taxon>Yersinia</taxon>
    </lineage>
</organism>
<comment type="function">
    <text evidence="1">Regulator of peptidoglycan synthesis that is essential for the function of penicillin-binding protein 1A (PBP1a).</text>
</comment>
<comment type="subunit">
    <text evidence="1">Interacts with PBP1a.</text>
</comment>
<comment type="subcellular location">
    <subcellularLocation>
        <location evidence="1">Cell outer membrane</location>
        <topology evidence="1">Lipid-anchor</topology>
        <orientation evidence="1">Periplasmic side</orientation>
    </subcellularLocation>
</comment>
<comment type="similarity">
    <text evidence="1">Belongs to the LpoA family.</text>
</comment>
<comment type="sequence caution" evidence="2">
    <conflict type="erroneous initiation">
        <sequence resource="EMBL-CDS" id="ABS49021"/>
    </conflict>
    <text>Extended N-terminus.</text>
</comment>
<gene>
    <name evidence="1" type="primary">lpoA</name>
    <name type="ordered locus">YpsIP31758_0475</name>
</gene>